<sequence length="445" mass="49678">MSELTKELMELVWGTNSSPGLSDTIFCRWTQGFVFSESEGSALEQFEGGPCAVIAPVQAFLLKKLLFSSEKSSWRDCPEEERKELLCHTLCDILESAGCDNSGSYCLVSWLRGKTTEETASLSGSPAQSSCQVEHSSALAVEELGFERFHALIQKRSFRSLAELRDAVLDQYSMWGNKFGVLLFLYSVLLTKGIENIKNEIEDSSEPLIDPVYGHGSQSLINLLLTGHAVSNVWDGDRECSGMKLLGIHEQAAVGFLTLMEALRYCKVGSYLKSPKFPIWIVGSETHLTVFFAKDMALVAPEAPSEQARRVFQTYDPEDNGFIPDSLLEDVMKALDLVSDPEYINLMKNKLDPEGLGIILLGPFLQEFFPDQGSSGPESFTVYHYNGLKQSNYNEKVMYVEGTAVVMGFEDPLLQTDDTPIKRCLQTKWPYIELLWTTDRSPSLN</sequence>
<keyword id="KW-0053">Apoptosis</keyword>
<keyword id="KW-0378">Hydrolase</keyword>
<keyword id="KW-0539">Nucleus</keyword>
<keyword id="KW-0597">Phosphoprotein</keyword>
<keyword id="KW-0645">Protease</keyword>
<keyword id="KW-1185">Reference proteome</keyword>
<keyword id="KW-0788">Thiol protease</keyword>
<keyword id="KW-0833">Ubl conjugation pathway</keyword>
<reference key="1">
    <citation type="submission" date="2006-08" db="EMBL/GenBank/DDBJ databases">
        <authorList>
            <consortium name="NIH - Mammalian Gene Collection (MGC) project"/>
        </authorList>
    </citation>
    <scope>NUCLEOTIDE SEQUENCE [LARGE SCALE MRNA]</scope>
    <source>
        <strain>Hereford</strain>
        <tissue>Basal ganglia</tissue>
    </source>
</reference>
<gene>
    <name type="primary">MINDY3</name>
    <name type="synonym">CARP</name>
    <name type="synonym">FAM188A</name>
</gene>
<protein>
    <recommendedName>
        <fullName>Ubiquitin carboxyl-terminal hydrolase MINDY-3</fullName>
        <ecNumber>3.4.19.12</ecNumber>
    </recommendedName>
    <alternativeName>
        <fullName>Deubiquitinating enzyme MINDY-3</fullName>
    </alternativeName>
    <alternativeName>
        <fullName>Protein CARP</fullName>
    </alternativeName>
</protein>
<accession>Q0IIH8</accession>
<evidence type="ECO:0000250" key="1">
    <source>
        <dbReference type="UniProtKB" id="Q8N5J2"/>
    </source>
</evidence>
<evidence type="ECO:0000250" key="2">
    <source>
        <dbReference type="UniProtKB" id="Q9H8M7"/>
    </source>
</evidence>
<evidence type="ECO:0000305" key="3"/>
<proteinExistence type="evidence at transcript level"/>
<organism>
    <name type="scientific">Bos taurus</name>
    <name type="common">Bovine</name>
    <dbReference type="NCBI Taxonomy" id="9913"/>
    <lineage>
        <taxon>Eukaryota</taxon>
        <taxon>Metazoa</taxon>
        <taxon>Chordata</taxon>
        <taxon>Craniata</taxon>
        <taxon>Vertebrata</taxon>
        <taxon>Euteleostomi</taxon>
        <taxon>Mammalia</taxon>
        <taxon>Eutheria</taxon>
        <taxon>Laurasiatheria</taxon>
        <taxon>Artiodactyla</taxon>
        <taxon>Ruminantia</taxon>
        <taxon>Pecora</taxon>
        <taxon>Bovidae</taxon>
        <taxon>Bovinae</taxon>
        <taxon>Bos</taxon>
    </lineage>
</organism>
<feature type="chain" id="PRO_0000317559" description="Ubiquitin carboxyl-terminal hydrolase MINDY-3">
    <location>
        <begin position="1"/>
        <end position="445"/>
    </location>
</feature>
<feature type="active site" description="Nucleophile" evidence="1">
    <location>
        <position position="51"/>
    </location>
</feature>
<feature type="active site" description="Proton acceptor" evidence="1">
    <location>
        <position position="287"/>
    </location>
</feature>
<feature type="modified residue" description="Phosphoserine" evidence="2">
    <location>
        <position position="125"/>
    </location>
</feature>
<name>MINY3_BOVIN</name>
<comment type="function">
    <text evidence="2">Hydrolase that can remove 'Lys-48'-linked conjugated ubiquitin from proteins.</text>
</comment>
<comment type="catalytic activity">
    <reaction evidence="2">
        <text>Thiol-dependent hydrolysis of ester, thioester, amide, peptide and isopeptide bonds formed by the C-terminal Gly of ubiquitin (a 76-residue protein attached to proteins as an intracellular targeting signal).</text>
        <dbReference type="EC" id="3.4.19.12"/>
    </reaction>
</comment>
<comment type="subunit">
    <text evidence="2">Interacts with COPS5.</text>
</comment>
<comment type="subcellular location">
    <subcellularLocation>
        <location evidence="2">Nucleus</location>
    </subcellularLocation>
</comment>
<comment type="similarity">
    <text evidence="3">Belongs to the MINDY deubiquitinase family. FAM188 subfamily.</text>
</comment>
<dbReference type="EC" id="3.4.19.12"/>
<dbReference type="EMBL" id="BC122636">
    <property type="protein sequence ID" value="AAI22637.1"/>
    <property type="molecule type" value="mRNA"/>
</dbReference>
<dbReference type="RefSeq" id="NP_001069575.1">
    <property type="nucleotide sequence ID" value="NM_001076107.1"/>
</dbReference>
<dbReference type="FunCoup" id="Q0IIH8">
    <property type="interactions" value="4444"/>
</dbReference>
<dbReference type="STRING" id="9913.ENSBTAP00000013714"/>
<dbReference type="PaxDb" id="9913-ENSBTAP00000013714"/>
<dbReference type="Ensembl" id="ENSBTAT00000013714.5">
    <property type="protein sequence ID" value="ENSBTAP00000013714.3"/>
    <property type="gene ID" value="ENSBTAG00000010387.5"/>
</dbReference>
<dbReference type="GeneID" id="538509"/>
<dbReference type="KEGG" id="bta:538509"/>
<dbReference type="CTD" id="80013"/>
<dbReference type="VEuPathDB" id="HostDB:ENSBTAG00000010387"/>
<dbReference type="VGNC" id="VGNC:31478">
    <property type="gene designation" value="MINDY3"/>
</dbReference>
<dbReference type="eggNOG" id="KOG2871">
    <property type="taxonomic scope" value="Eukaryota"/>
</dbReference>
<dbReference type="GeneTree" id="ENSGT00940000155958"/>
<dbReference type="HOGENOM" id="CLU_033478_0_0_1"/>
<dbReference type="InParanoid" id="Q0IIH8"/>
<dbReference type="OMA" id="VLQTKWP"/>
<dbReference type="OrthoDB" id="9981542at2759"/>
<dbReference type="TreeFam" id="TF323996"/>
<dbReference type="Proteomes" id="UP000009136">
    <property type="component" value="Chromosome 13"/>
</dbReference>
<dbReference type="Bgee" id="ENSBTAG00000010387">
    <property type="expression patterns" value="Expressed in oocyte and 108 other cell types or tissues"/>
</dbReference>
<dbReference type="GO" id="GO:0005634">
    <property type="term" value="C:nucleus"/>
    <property type="evidence" value="ECO:0007669"/>
    <property type="project" value="UniProtKB-SubCell"/>
</dbReference>
<dbReference type="GO" id="GO:0004843">
    <property type="term" value="F:cysteine-type deubiquitinase activity"/>
    <property type="evidence" value="ECO:0007669"/>
    <property type="project" value="UniProtKB-EC"/>
</dbReference>
<dbReference type="GO" id="GO:1990380">
    <property type="term" value="F:K48-linked deubiquitinase activity"/>
    <property type="evidence" value="ECO:0000318"/>
    <property type="project" value="GO_Central"/>
</dbReference>
<dbReference type="GO" id="GO:0006915">
    <property type="term" value="P:apoptotic process"/>
    <property type="evidence" value="ECO:0007669"/>
    <property type="project" value="UniProtKB-KW"/>
</dbReference>
<dbReference type="GO" id="GO:0071108">
    <property type="term" value="P:protein K48-linked deubiquitination"/>
    <property type="evidence" value="ECO:0007669"/>
    <property type="project" value="InterPro"/>
</dbReference>
<dbReference type="GO" id="GO:0006508">
    <property type="term" value="P:proteolysis"/>
    <property type="evidence" value="ECO:0007669"/>
    <property type="project" value="UniProtKB-KW"/>
</dbReference>
<dbReference type="FunFam" id="1.10.238.10:FF:000315">
    <property type="entry name" value="Ubiquitin carboxyl-terminal hydrolase MINDY-3"/>
    <property type="match status" value="1"/>
</dbReference>
<dbReference type="Gene3D" id="1.10.238.10">
    <property type="entry name" value="EF-hand"/>
    <property type="match status" value="1"/>
</dbReference>
<dbReference type="InterPro" id="IPR011992">
    <property type="entry name" value="EF-hand-dom_pair"/>
</dbReference>
<dbReference type="InterPro" id="IPR025257">
    <property type="entry name" value="MINDY-3/4_CD"/>
</dbReference>
<dbReference type="InterPro" id="IPR039785">
    <property type="entry name" value="MINY3/4"/>
</dbReference>
<dbReference type="PANTHER" id="PTHR12473:SF17">
    <property type="entry name" value="UBIQUITIN CARBOXYL-TERMINAL HYDROLASE MINDY-3"/>
    <property type="match status" value="1"/>
</dbReference>
<dbReference type="PANTHER" id="PTHR12473">
    <property type="entry name" value="UBIQUITIN CARBOXYL-TERMINAL HYDROLASE MINDY-4-RELATED"/>
    <property type="match status" value="1"/>
</dbReference>
<dbReference type="Pfam" id="PF13898">
    <property type="entry name" value="MINDY-3_4_CD"/>
    <property type="match status" value="1"/>
</dbReference>
<dbReference type="SMART" id="SM01174">
    <property type="entry name" value="DUF4205"/>
    <property type="match status" value="1"/>
</dbReference>
<dbReference type="SUPFAM" id="SSF47473">
    <property type="entry name" value="EF-hand"/>
    <property type="match status" value="1"/>
</dbReference>